<comment type="function">
    <text evidence="1">Catalyzes the attachment of valine to tRNA(Val). As ValRS can inadvertently accommodate and process structurally similar amino acids such as threonine, to avoid such errors, it has a 'posttransfer' editing activity that hydrolyzes mischarged Thr-tRNA(Val) in a tRNA-dependent manner.</text>
</comment>
<comment type="catalytic activity">
    <reaction evidence="1">
        <text>tRNA(Val) + L-valine + ATP = L-valyl-tRNA(Val) + AMP + diphosphate</text>
        <dbReference type="Rhea" id="RHEA:10704"/>
        <dbReference type="Rhea" id="RHEA-COMP:9672"/>
        <dbReference type="Rhea" id="RHEA-COMP:9708"/>
        <dbReference type="ChEBI" id="CHEBI:30616"/>
        <dbReference type="ChEBI" id="CHEBI:33019"/>
        <dbReference type="ChEBI" id="CHEBI:57762"/>
        <dbReference type="ChEBI" id="CHEBI:78442"/>
        <dbReference type="ChEBI" id="CHEBI:78537"/>
        <dbReference type="ChEBI" id="CHEBI:456215"/>
        <dbReference type="EC" id="6.1.1.9"/>
    </reaction>
</comment>
<comment type="subunit">
    <text evidence="1">Monomer.</text>
</comment>
<comment type="subcellular location">
    <subcellularLocation>
        <location evidence="1">Cytoplasm</location>
    </subcellularLocation>
</comment>
<comment type="domain">
    <text evidence="1">ValRS has two distinct active sites: one for aminoacylation and one for editing. The misactivated threonine is translocated from the active site to the editing site.</text>
</comment>
<comment type="domain">
    <text evidence="1">The C-terminal coiled-coil domain is crucial for aminoacylation activity.</text>
</comment>
<comment type="similarity">
    <text evidence="1">Belongs to the class-I aminoacyl-tRNA synthetase family. ValS type 1 subfamily.</text>
</comment>
<proteinExistence type="inferred from homology"/>
<reference key="1">
    <citation type="journal article" date="2001" name="J. Bacteriol.">
        <title>Genome of the bacterium Streptococcus pneumoniae strain R6.</title>
        <authorList>
            <person name="Hoskins J."/>
            <person name="Alborn W.E. Jr."/>
            <person name="Arnold J."/>
            <person name="Blaszczak L.C."/>
            <person name="Burgett S."/>
            <person name="DeHoff B.S."/>
            <person name="Estrem S.T."/>
            <person name="Fritz L."/>
            <person name="Fu D.-J."/>
            <person name="Fuller W."/>
            <person name="Geringer C."/>
            <person name="Gilmour R."/>
            <person name="Glass J.S."/>
            <person name="Khoja H."/>
            <person name="Kraft A.R."/>
            <person name="Lagace R.E."/>
            <person name="LeBlanc D.J."/>
            <person name="Lee L.N."/>
            <person name="Lefkowitz E.J."/>
            <person name="Lu J."/>
            <person name="Matsushima P."/>
            <person name="McAhren S.M."/>
            <person name="McHenney M."/>
            <person name="McLeaster K."/>
            <person name="Mundy C.W."/>
            <person name="Nicas T.I."/>
            <person name="Norris F.H."/>
            <person name="O'Gara M."/>
            <person name="Peery R.B."/>
            <person name="Robertson G.T."/>
            <person name="Rockey P."/>
            <person name="Sun P.-M."/>
            <person name="Winkler M.E."/>
            <person name="Yang Y."/>
            <person name="Young-Bellido M."/>
            <person name="Zhao G."/>
            <person name="Zook C.A."/>
            <person name="Baltz R.H."/>
            <person name="Jaskunas S.R."/>
            <person name="Rosteck P.R. Jr."/>
            <person name="Skatrud P.L."/>
            <person name="Glass J.I."/>
        </authorList>
    </citation>
    <scope>NUCLEOTIDE SEQUENCE [LARGE SCALE GENOMIC DNA]</scope>
    <source>
        <strain>ATCC BAA-255 / R6</strain>
    </source>
</reference>
<protein>
    <recommendedName>
        <fullName evidence="1">Valine--tRNA ligase</fullName>
        <ecNumber evidence="1">6.1.1.9</ecNumber>
    </recommendedName>
    <alternativeName>
        <fullName evidence="1">Valyl-tRNA synthetase</fullName>
        <shortName evidence="1">ValRS</shortName>
    </alternativeName>
</protein>
<feature type="chain" id="PRO_0000224575" description="Valine--tRNA ligase">
    <location>
        <begin position="1"/>
        <end position="883"/>
    </location>
</feature>
<feature type="coiled-coil region" evidence="1">
    <location>
        <begin position="809"/>
        <end position="844"/>
    </location>
</feature>
<feature type="short sequence motif" description="'HIGH' region">
    <location>
        <begin position="46"/>
        <end position="56"/>
    </location>
</feature>
<feature type="short sequence motif" description="'KMSKS' region">
    <location>
        <begin position="520"/>
        <end position="524"/>
    </location>
</feature>
<feature type="binding site" evidence="1">
    <location>
        <position position="523"/>
    </location>
    <ligand>
        <name>ATP</name>
        <dbReference type="ChEBI" id="CHEBI:30616"/>
    </ligand>
</feature>
<accession>Q8DQU7</accession>
<organism>
    <name type="scientific">Streptococcus pneumoniae (strain ATCC BAA-255 / R6)</name>
    <dbReference type="NCBI Taxonomy" id="171101"/>
    <lineage>
        <taxon>Bacteria</taxon>
        <taxon>Bacillati</taxon>
        <taxon>Bacillota</taxon>
        <taxon>Bacilli</taxon>
        <taxon>Lactobacillales</taxon>
        <taxon>Streptococcaceae</taxon>
        <taxon>Streptococcus</taxon>
    </lineage>
</organism>
<name>SYV_STRR6</name>
<sequence length="883" mass="100857">MSKELSSKYNPAEVEAGRYQKWLDADVFKPSGDQKAKPYSIVIPPPNVTGKLHLGHAWDTTLQDIIIRQKRMQGFDTLWLPGMDHAGIATQAKVEERLRGEGISRYDLGRESFLTKVWEWKDEYATTIKEQWGKMGLSVDYSRERFTLDEGLSKAVRKVFVDLYKKGWIYRGEFIINWDPAARTALSDIEVIHKDVEGAFYHMNYMLEDGSRALEVATTRPETMFGDVAIAVNPEDPRYKDLIGKNVILPIANKLIPIVGDEHADPEFGTGVVKITPAHDPNDFLVGQRHNLPQVNIMNDDGTMNELVFEFSGMDRFEARKAVVAKLEEIGALVKIEKRVHSVGHSERTGVVVEPRLSTQWFVKMDQLAKNAIANQDTEDKVEFYPPRFNDTFLQWMENVHDWVISRQLWWGHQIPAWYNADGEMYVGEEAPEGDGWTQDEDVLDTWFSSALWPFSTMGWPEVDSEDFKRYFPTSTLVTGYDIIFFWVSRMIFQSLEFTGRQPFQNVLIHGLIRDEQGRKMSKSLGNGIDPMDVIEKYGADALRWFLSNGSAPGQDVRFSYEKMDASWNFINKIWNISRYILMNNGGLTLDVAHDNVTKVATGEAGNVTDRWILHNLNETIAKVTENFDKFEFGVAGHILYNFIWEEFANWYVELTKEVLYSDNEDDKVITRSVLLYTLDKILRLLHSIMPFVTEEIFGQYAEGSIVTAAYPTVNPAFEDLAAHTGVESLKDLIRAVRNARAEVNVAPSKPITILVKTSDSDLEAFFNSNVNYIKRFTNPEHLEIASTIPAPELAMSSVITGAEIFLPLVDLLNVEEELARLEKELAKWQKELDMVGKKLSNERFVANAKPEVVQKEKDKQADYQAKYDVTVARIDEMKKLVK</sequence>
<dbReference type="EC" id="6.1.1.9" evidence="1"/>
<dbReference type="EMBL" id="AE007317">
    <property type="protein sequence ID" value="AAK99296.1"/>
    <property type="molecule type" value="Genomic_DNA"/>
</dbReference>
<dbReference type="PIR" id="D97933">
    <property type="entry name" value="D97933"/>
</dbReference>
<dbReference type="RefSeq" id="NP_358086.1">
    <property type="nucleotide sequence ID" value="NC_003098.1"/>
</dbReference>
<dbReference type="RefSeq" id="WP_000032218.1">
    <property type="nucleotide sequence ID" value="NC_003098.1"/>
</dbReference>
<dbReference type="SMR" id="Q8DQU7"/>
<dbReference type="STRING" id="171101.spr0492"/>
<dbReference type="KEGG" id="spr:spr0492"/>
<dbReference type="PATRIC" id="fig|171101.6.peg.542"/>
<dbReference type="eggNOG" id="COG0525">
    <property type="taxonomic scope" value="Bacteria"/>
</dbReference>
<dbReference type="HOGENOM" id="CLU_001493_0_2_9"/>
<dbReference type="Proteomes" id="UP000000586">
    <property type="component" value="Chromosome"/>
</dbReference>
<dbReference type="GO" id="GO:0005829">
    <property type="term" value="C:cytosol"/>
    <property type="evidence" value="ECO:0000318"/>
    <property type="project" value="GO_Central"/>
</dbReference>
<dbReference type="GO" id="GO:0002161">
    <property type="term" value="F:aminoacyl-tRNA deacylase activity"/>
    <property type="evidence" value="ECO:0007669"/>
    <property type="project" value="InterPro"/>
</dbReference>
<dbReference type="GO" id="GO:0005524">
    <property type="term" value="F:ATP binding"/>
    <property type="evidence" value="ECO:0007669"/>
    <property type="project" value="UniProtKB-UniRule"/>
</dbReference>
<dbReference type="GO" id="GO:0004832">
    <property type="term" value="F:valine-tRNA ligase activity"/>
    <property type="evidence" value="ECO:0000318"/>
    <property type="project" value="GO_Central"/>
</dbReference>
<dbReference type="GO" id="GO:0006438">
    <property type="term" value="P:valyl-tRNA aminoacylation"/>
    <property type="evidence" value="ECO:0000318"/>
    <property type="project" value="GO_Central"/>
</dbReference>
<dbReference type="CDD" id="cd07962">
    <property type="entry name" value="Anticodon_Ia_Val"/>
    <property type="match status" value="1"/>
</dbReference>
<dbReference type="CDD" id="cd00817">
    <property type="entry name" value="ValRS_core"/>
    <property type="match status" value="1"/>
</dbReference>
<dbReference type="FunFam" id="1.10.287.380:FF:000001">
    <property type="entry name" value="Valine--tRNA ligase"/>
    <property type="match status" value="1"/>
</dbReference>
<dbReference type="FunFam" id="1.10.730.10:FF:000014">
    <property type="entry name" value="Valine--tRNA ligase"/>
    <property type="match status" value="1"/>
</dbReference>
<dbReference type="FunFam" id="3.40.50.620:FF:000032">
    <property type="entry name" value="Valine--tRNA ligase"/>
    <property type="match status" value="1"/>
</dbReference>
<dbReference type="FunFam" id="3.40.50.620:FF:000098">
    <property type="entry name" value="Valine--tRNA ligase"/>
    <property type="match status" value="1"/>
</dbReference>
<dbReference type="FunFam" id="3.90.740.10:FF:000005">
    <property type="entry name" value="Valine--tRNA ligase, mitochondrial"/>
    <property type="match status" value="1"/>
</dbReference>
<dbReference type="Gene3D" id="3.40.50.620">
    <property type="entry name" value="HUPs"/>
    <property type="match status" value="2"/>
</dbReference>
<dbReference type="Gene3D" id="1.10.730.10">
    <property type="entry name" value="Isoleucyl-tRNA Synthetase, Domain 1"/>
    <property type="match status" value="1"/>
</dbReference>
<dbReference type="Gene3D" id="1.10.287.380">
    <property type="entry name" value="Valyl-tRNA synthetase, C-terminal domain"/>
    <property type="match status" value="1"/>
</dbReference>
<dbReference type="Gene3D" id="3.90.740.10">
    <property type="entry name" value="Valyl/Leucyl/Isoleucyl-tRNA synthetase, editing domain"/>
    <property type="match status" value="1"/>
</dbReference>
<dbReference type="HAMAP" id="MF_02004">
    <property type="entry name" value="Val_tRNA_synth_type1"/>
    <property type="match status" value="1"/>
</dbReference>
<dbReference type="InterPro" id="IPR001412">
    <property type="entry name" value="aa-tRNA-synth_I_CS"/>
</dbReference>
<dbReference type="InterPro" id="IPR002300">
    <property type="entry name" value="aa-tRNA-synth_Ia"/>
</dbReference>
<dbReference type="InterPro" id="IPR033705">
    <property type="entry name" value="Anticodon_Ia_Val"/>
</dbReference>
<dbReference type="InterPro" id="IPR013155">
    <property type="entry name" value="M/V/L/I-tRNA-synth_anticd-bd"/>
</dbReference>
<dbReference type="InterPro" id="IPR014729">
    <property type="entry name" value="Rossmann-like_a/b/a_fold"/>
</dbReference>
<dbReference type="InterPro" id="IPR010978">
    <property type="entry name" value="tRNA-bd_arm"/>
</dbReference>
<dbReference type="InterPro" id="IPR009080">
    <property type="entry name" value="tRNAsynth_Ia_anticodon-bd"/>
</dbReference>
<dbReference type="InterPro" id="IPR037118">
    <property type="entry name" value="Val-tRNA_synth_C_sf"/>
</dbReference>
<dbReference type="InterPro" id="IPR019499">
    <property type="entry name" value="Val-tRNA_synth_tRNA-bd"/>
</dbReference>
<dbReference type="InterPro" id="IPR009008">
    <property type="entry name" value="Val/Leu/Ile-tRNA-synth_edit"/>
</dbReference>
<dbReference type="InterPro" id="IPR002303">
    <property type="entry name" value="Valyl-tRNA_ligase"/>
</dbReference>
<dbReference type="NCBIfam" id="NF004349">
    <property type="entry name" value="PRK05729.1"/>
    <property type="match status" value="1"/>
</dbReference>
<dbReference type="NCBIfam" id="TIGR00422">
    <property type="entry name" value="valS"/>
    <property type="match status" value="1"/>
</dbReference>
<dbReference type="PANTHER" id="PTHR11946:SF93">
    <property type="entry name" value="VALINE--TRNA LIGASE, CHLOROPLASTIC_MITOCHONDRIAL 2"/>
    <property type="match status" value="1"/>
</dbReference>
<dbReference type="PANTHER" id="PTHR11946">
    <property type="entry name" value="VALYL-TRNA SYNTHETASES"/>
    <property type="match status" value="1"/>
</dbReference>
<dbReference type="Pfam" id="PF08264">
    <property type="entry name" value="Anticodon_1"/>
    <property type="match status" value="1"/>
</dbReference>
<dbReference type="Pfam" id="PF00133">
    <property type="entry name" value="tRNA-synt_1"/>
    <property type="match status" value="2"/>
</dbReference>
<dbReference type="Pfam" id="PF10458">
    <property type="entry name" value="Val_tRNA-synt_C"/>
    <property type="match status" value="1"/>
</dbReference>
<dbReference type="PRINTS" id="PR00986">
    <property type="entry name" value="TRNASYNTHVAL"/>
</dbReference>
<dbReference type="SUPFAM" id="SSF47323">
    <property type="entry name" value="Anticodon-binding domain of a subclass of class I aminoacyl-tRNA synthetases"/>
    <property type="match status" value="1"/>
</dbReference>
<dbReference type="SUPFAM" id="SSF52374">
    <property type="entry name" value="Nucleotidylyl transferase"/>
    <property type="match status" value="1"/>
</dbReference>
<dbReference type="SUPFAM" id="SSF46589">
    <property type="entry name" value="tRNA-binding arm"/>
    <property type="match status" value="1"/>
</dbReference>
<dbReference type="SUPFAM" id="SSF50677">
    <property type="entry name" value="ValRS/IleRS/LeuRS editing domain"/>
    <property type="match status" value="1"/>
</dbReference>
<dbReference type="PROSITE" id="PS00178">
    <property type="entry name" value="AA_TRNA_LIGASE_I"/>
    <property type="match status" value="1"/>
</dbReference>
<evidence type="ECO:0000255" key="1">
    <source>
        <dbReference type="HAMAP-Rule" id="MF_02004"/>
    </source>
</evidence>
<gene>
    <name evidence="1" type="primary">valS</name>
    <name type="ordered locus">spr0492</name>
</gene>
<keyword id="KW-0030">Aminoacyl-tRNA synthetase</keyword>
<keyword id="KW-0067">ATP-binding</keyword>
<keyword id="KW-0175">Coiled coil</keyword>
<keyword id="KW-0963">Cytoplasm</keyword>
<keyword id="KW-0436">Ligase</keyword>
<keyword id="KW-0547">Nucleotide-binding</keyword>
<keyword id="KW-0648">Protein biosynthesis</keyword>
<keyword id="KW-1185">Reference proteome</keyword>